<proteinExistence type="evidence at transcript level"/>
<organism>
    <name type="scientific">Zinnia elegans</name>
    <name type="common">Garden zinnia</name>
    <name type="synonym">Zinnia violacea</name>
    <dbReference type="NCBI Taxonomy" id="34245"/>
    <lineage>
        <taxon>Eukaryota</taxon>
        <taxon>Viridiplantae</taxon>
        <taxon>Streptophyta</taxon>
        <taxon>Embryophyta</taxon>
        <taxon>Tracheophyta</taxon>
        <taxon>Spermatophyta</taxon>
        <taxon>Magnoliopsida</taxon>
        <taxon>eudicotyledons</taxon>
        <taxon>Gunneridae</taxon>
        <taxon>Pentapetalae</taxon>
        <taxon>asterids</taxon>
        <taxon>campanulids</taxon>
        <taxon>Asterales</taxon>
        <taxon>Asteraceae</taxon>
        <taxon>Asteroideae</taxon>
        <taxon>Heliantheae alliance</taxon>
        <taxon>Heliantheae</taxon>
        <taxon>Zinnia</taxon>
    </lineage>
</organism>
<reference key="1">
    <citation type="journal article" date="2009" name="Plant Cell">
        <title>Identifying new components participating in the secondary cell wall formation of vessel elements in zinnia and Arabidopsis.</title>
        <authorList>
            <person name="Endo S."/>
            <person name="Pesquet E."/>
            <person name="Yamaguchi M."/>
            <person name="Tashiro G."/>
            <person name="Sato M."/>
            <person name="Toyooka K."/>
            <person name="Nishikubo N."/>
            <person name="Udagawa-Motose M."/>
            <person name="Kubo M."/>
            <person name="Fukuda H."/>
            <person name="Demura T."/>
        </authorList>
    </citation>
    <scope>NUCLEOTIDE SEQUENCE [MRNA]</scope>
    <scope>FUNCTION</scope>
    <scope>DISRUPTION PHENOTYPE</scope>
    <scope>ALLELE TED7-2/TED7B</scope>
    <scope>TISSUE SPECIFICITY</scope>
    <scope>SUBCELLULAR LOCATION</scope>
    <source>
        <strain>cv. Canary Bird</strain>
    </source>
</reference>
<name>TED7_ZINEL</name>
<keyword id="KW-1003">Cell membrane</keyword>
<keyword id="KW-0134">Cell wall</keyword>
<keyword id="KW-0961">Cell wall biogenesis/degradation</keyword>
<keyword id="KW-0217">Developmental protein</keyword>
<keyword id="KW-0325">Glycoprotein</keyword>
<keyword id="KW-0472">Membrane</keyword>
<keyword id="KW-0964">Secreted</keyword>
<keyword id="KW-0812">Transmembrane</keyword>
<keyword id="KW-1133">Transmembrane helix</keyword>
<evidence type="ECO:0000255" key="1"/>
<evidence type="ECO:0000255" key="2">
    <source>
        <dbReference type="PROSITE-ProRule" id="PRU00498"/>
    </source>
</evidence>
<evidence type="ECO:0000256" key="3">
    <source>
        <dbReference type="SAM" id="MobiDB-lite"/>
    </source>
</evidence>
<evidence type="ECO:0000269" key="4">
    <source>
    </source>
</evidence>
<evidence type="ECO:0000303" key="5">
    <source>
    </source>
</evidence>
<evidence type="ECO:0000305" key="6"/>
<evidence type="ECO:0000305" key="7">
    <source>
    </source>
</evidence>
<feature type="chain" id="PRO_0000448739" description="Protein TRACHEARY ELEMENT DIFFERENTIATION-RELATED 7A">
    <location>
        <begin position="1"/>
        <end position="300"/>
    </location>
</feature>
<feature type="topological domain" description="Extracellular" evidence="6">
    <location>
        <begin position="1"/>
        <end position="187"/>
    </location>
</feature>
<feature type="transmembrane region" description="Helical" evidence="1">
    <location>
        <begin position="188"/>
        <end position="208"/>
    </location>
</feature>
<feature type="topological domain" description="Cytoplasmic" evidence="6">
    <location>
        <begin position="209"/>
        <end position="300"/>
    </location>
</feature>
<feature type="region of interest" description="Disordered" evidence="3">
    <location>
        <begin position="1"/>
        <end position="181"/>
    </location>
</feature>
<feature type="compositionally biased region" description="Pro residues" evidence="3">
    <location>
        <begin position="12"/>
        <end position="181"/>
    </location>
</feature>
<feature type="glycosylation site" description="N-linked (GlcNAc...) asparagine" evidence="2">
    <location>
        <position position="183"/>
    </location>
</feature>
<feature type="sequence variant" description="In allele TED7-2/TED7B." evidence="7">
    <original>P</original>
    <variation>H</variation>
    <location>
        <position position="4"/>
    </location>
</feature>
<feature type="sequence variant" description="In allele TED7-2/TED7B." evidence="7">
    <original>V</original>
    <variation>L</variation>
    <location>
        <position position="9"/>
    </location>
</feature>
<feature type="sequence variant" description="In allele TED7-2/TED7B." evidence="7">
    <original>SPPHPVSPPP</original>
    <variation>LPPHSVPPPS</variation>
    <location>
        <begin position="64"/>
        <end position="73"/>
    </location>
</feature>
<feature type="sequence variant" description="In allele TED7-2/TED7B." evidence="7">
    <original>F</original>
    <variation>S</variation>
    <location>
        <position position="102"/>
    </location>
</feature>
<feature type="sequence variant" description="In allele TED7-2/TED7B." evidence="7">
    <original>HFVPPPPNM</original>
    <variation>PHHVSPPPHT</variation>
    <location>
        <begin position="114"/>
        <end position="122"/>
    </location>
</feature>
<feature type="sequence variant" description="In allele TED7-2/TED7B." evidence="7">
    <original>PHANPPPPPPPHS</original>
    <variation>HF</variation>
    <location>
        <begin position="129"/>
        <end position="141"/>
    </location>
</feature>
<feature type="sequence variant" description="In allele TED7-2/TED7B." evidence="7">
    <original>HTVPPPPPPPHIIPPPAHALSPPPPH</original>
    <variation>NTVPPPPAPHFVPPPPPPY</variation>
    <location>
        <begin position="147"/>
        <end position="172"/>
    </location>
</feature>
<feature type="sequence variant" description="In allele TED7-2/TED7B." evidence="7">
    <original>Q</original>
    <variation>R</variation>
    <location>
        <position position="221"/>
    </location>
</feature>
<feature type="sequence variant" description="In allele TED7-2/TED7B." evidence="7">
    <original>LEN</original>
    <variation>IED</variation>
    <location>
        <begin position="267"/>
        <end position="269"/>
    </location>
</feature>
<protein>
    <recommendedName>
        <fullName evidence="5">Protein TRACHEARY ELEMENT DIFFERENTIATION-RELATED 7A</fullName>
        <shortName evidence="5">TED7-1</shortName>
    </recommendedName>
</protein>
<gene>
    <name evidence="5" type="primary">TED7</name>
    <name evidence="5" type="synonym">TED7-1</name>
    <name evidence="5" type="synonym">TED7-2</name>
    <name evidence="5" type="synonym">TED7A</name>
    <name evidence="5" type="synonym">TED7B</name>
</gene>
<accession>C1PGW1</accession>
<accession>C1PGW2</accession>
<sequence>MASPLSQSVFPHFPPPSPAATPPPAPTTPSTPPPHFISPPPHSVPPPSPPHSVPPPLHPVPPPSPPHPVSPPPHTVPPPSPPHPVSPPPHTVPPPSPPHPVFPPPHTVPPPSPHFVPPPPNMVPPPSPPHANPPPPPPPHSVPPPPHTVPPPPPPPHIIPPPAHALSPPPPHIIPPPPPSPSNHSTTIVVIFVSCGGVFFLAFAMAALWCFLKKKKKKMVQKAENIHFDEHRKVTERIEQGPHGTETAILSVEDDIHIEEDIKKSELENFRKGLHLNYGNTYNIDTGKPSSSFGHHYLHG</sequence>
<comment type="function">
    <text evidence="4">Involved in the secondary cell wall (SCW) formation of vessel elements (e.g. protoxylem and metaxylem), thus promoting tracheary element (TE) differentiation.</text>
</comment>
<comment type="subcellular location">
    <subcellularLocation>
        <location evidence="4">Cell membrane</location>
        <topology evidence="1">Single-pass membrane protein</topology>
    </subcellularLocation>
    <subcellularLocation>
        <location evidence="4">Secreted</location>
        <location evidence="4">Cell wall</location>
    </subcellularLocation>
</comment>
<comment type="tissue specificity">
    <text evidence="4">Accumulates in cells differentiating into tracheary element (TE) which undergo secondary cell wall (SCW) formation.</text>
</comment>
<comment type="disruption phenotype">
    <text evidence="4">Delayed secondary cell wall (SCW) formation during tracheary element (TE) differentiation.</text>
</comment>
<dbReference type="EMBL" id="AB377515">
    <property type="protein sequence ID" value="BAH57854.1"/>
    <property type="molecule type" value="mRNA"/>
</dbReference>
<dbReference type="EMBL" id="AB377516">
    <property type="protein sequence ID" value="BAH57855.1"/>
    <property type="molecule type" value="mRNA"/>
</dbReference>
<dbReference type="SMR" id="C1PGW1"/>
<dbReference type="GlyCosmos" id="C1PGW1">
    <property type="glycosylation" value="1 site, No reported glycans"/>
</dbReference>
<dbReference type="GO" id="GO:0005576">
    <property type="term" value="C:extracellular region"/>
    <property type="evidence" value="ECO:0007669"/>
    <property type="project" value="UniProtKB-KW"/>
</dbReference>
<dbReference type="GO" id="GO:0009505">
    <property type="term" value="C:plant-type cell wall"/>
    <property type="evidence" value="ECO:0000314"/>
    <property type="project" value="UniProtKB"/>
</dbReference>
<dbReference type="GO" id="GO:0005886">
    <property type="term" value="C:plasma membrane"/>
    <property type="evidence" value="ECO:0000314"/>
    <property type="project" value="UniProtKB"/>
</dbReference>
<dbReference type="GO" id="GO:0071555">
    <property type="term" value="P:cell wall organization"/>
    <property type="evidence" value="ECO:0007669"/>
    <property type="project" value="UniProtKB-KW"/>
</dbReference>
<dbReference type="GO" id="GO:0009834">
    <property type="term" value="P:plant-type secondary cell wall biogenesis"/>
    <property type="evidence" value="ECO:0007669"/>
    <property type="project" value="InterPro"/>
</dbReference>
<dbReference type="GO" id="GO:2000652">
    <property type="term" value="P:regulation of secondary cell wall biogenesis"/>
    <property type="evidence" value="ECO:0000315"/>
    <property type="project" value="UniProtKB"/>
</dbReference>
<dbReference type="GO" id="GO:1905177">
    <property type="term" value="P:tracheary element differentiation"/>
    <property type="evidence" value="ECO:0000315"/>
    <property type="project" value="UniProtKB"/>
</dbReference>
<dbReference type="InterPro" id="IPR044950">
    <property type="entry name" value="TED6/7"/>
</dbReference>
<dbReference type="PANTHER" id="PTHR35697">
    <property type="entry name" value="OS08G0108300 PROTEIN"/>
    <property type="match status" value="1"/>
</dbReference>
<dbReference type="PANTHER" id="PTHR35697:SF1">
    <property type="entry name" value="PROTEIN TRACHEARY ELEMENT DIFFERENTIATION-RELATED 7"/>
    <property type="match status" value="1"/>
</dbReference>
<dbReference type="PRINTS" id="PR01217">
    <property type="entry name" value="PRICHEXTENSN"/>
</dbReference>